<proteinExistence type="evidence at transcript level"/>
<organism>
    <name type="scientific">Danio rerio</name>
    <name type="common">Zebrafish</name>
    <name type="synonym">Brachydanio rerio</name>
    <dbReference type="NCBI Taxonomy" id="7955"/>
    <lineage>
        <taxon>Eukaryota</taxon>
        <taxon>Metazoa</taxon>
        <taxon>Chordata</taxon>
        <taxon>Craniata</taxon>
        <taxon>Vertebrata</taxon>
        <taxon>Euteleostomi</taxon>
        <taxon>Actinopterygii</taxon>
        <taxon>Neopterygii</taxon>
        <taxon>Teleostei</taxon>
        <taxon>Ostariophysi</taxon>
        <taxon>Cypriniformes</taxon>
        <taxon>Danionidae</taxon>
        <taxon>Danioninae</taxon>
        <taxon>Danio</taxon>
    </lineage>
</organism>
<protein>
    <recommendedName>
        <fullName>Protein O-linked-mannose beta-1,4-N-acetylglucosaminyltransferase 2</fullName>
        <shortName>POMGnT2</shortName>
        <ecNumber evidence="1">2.4.1.312</ecNumber>
    </recommendedName>
    <alternativeName>
        <fullName>Extracellular O-linked N-acetylglucosamine transferase-like</fullName>
    </alternativeName>
    <alternativeName>
        <fullName>Glycosyltransferase-like domain-containing protein 2</fullName>
    </alternativeName>
</protein>
<accession>Q5NDE5</accession>
<accession>Q502K0</accession>
<sequence length="578" mass="67056">MNLPAVLNGLLVSVVAALLWKYVRLVEHTSQLEEELQLTRQSQEFSQVRIDYHGALLALQEHGTRMVCTGKMHTDRICRFDYLCYCTEAEEFVFFHSNASVMLPNLGSRRFQPALLDLSSVEDHNTQYFNFLELPAAALKFMPKPVFVPDVTLILNRFNPDNLMHIFHDDLLPVYYTMQQYSDLDDEARLVFMEGWGEGAHFDLYRLLSSKQPLLKDQLKTFGKLMCFTKSYVGLSKMTTWYQYGFVQPQGPKANILISGNEIRQFASFLMERLNITREEEEEDDDYIVVFKRTTNRLILNEAELLLALAQEFQMRTVTVSLEEQSFDNIIQIISRAAMLVSMHGAQMITSMFLPRGAAVVELFPYGVNPEQYTPYKTLASLPGMDLQYVAWRNTMEENTVTFPDRPWDQGGIVHLEKEEQERILASKEVPRHLCCRNPEWLFRIYQDTTVDLASFLDVLRDGLKKLNLKKAKVASTVHPGRVREPKCQTSVQATNEAKLSVSWQIPWNLKYLKVKEVKYEVWIQEQGENTYMPYILPHQNYTFSENIKPFTTYLVWVRCIFNKNLLGPFADVLICKT</sequence>
<evidence type="ECO:0000250" key="1">
    <source>
        <dbReference type="UniProtKB" id="Q8NAT1"/>
    </source>
</evidence>
<evidence type="ECO:0000255" key="2"/>
<evidence type="ECO:0000255" key="3">
    <source>
        <dbReference type="PROSITE-ProRule" id="PRU00316"/>
    </source>
</evidence>
<evidence type="ECO:0000269" key="4">
    <source>
    </source>
</evidence>
<evidence type="ECO:0000305" key="5"/>
<comment type="function">
    <text evidence="1">O-linked mannose beta-1,4-N-acetylglucosaminyltransferase that transfers UDP-N-acetyl-D-glucosamine to the 4-position of the mannose to generate N-acetyl-D-glucosamine-beta-1,4-O-D-mannosylprotein. Involved in the biosynthesis of the phosphorylated O-mannosyl trisaccharide (N-acetylgalactosamine-beta-3-N-acetylglucosamine-beta-4-(phosphate-6-)mannose), a carbohydrate structure present in alpha-dystroglycan (DAG1), which is required for binding laminin G-like domain-containing extracellular proteins with high affinity (By similarity).</text>
</comment>
<comment type="catalytic activity">
    <reaction evidence="1">
        <text>3-O-(alpha-D-mannosyl)-L-threonyl-[protein] + UDP-N-acetyl-alpha-D-glucosamine = 3-O-(N-acetyl-beta-D-glucosaminyl-(1-&gt;4)-alpha-D-mannosyl)-L-threonyl-[protein] + UDP + H(+)</text>
        <dbReference type="Rhea" id="RHEA:37663"/>
        <dbReference type="Rhea" id="RHEA-COMP:13547"/>
        <dbReference type="Rhea" id="RHEA-COMP:13618"/>
        <dbReference type="ChEBI" id="CHEBI:15378"/>
        <dbReference type="ChEBI" id="CHEBI:57705"/>
        <dbReference type="ChEBI" id="CHEBI:58223"/>
        <dbReference type="ChEBI" id="CHEBI:137323"/>
        <dbReference type="ChEBI" id="CHEBI:137540"/>
        <dbReference type="EC" id="2.4.1.312"/>
    </reaction>
</comment>
<comment type="pathway">
    <text evidence="1">Protein modification; protein glycosylation.</text>
</comment>
<comment type="subcellular location">
    <subcellularLocation>
        <location evidence="1">Endoplasmic reticulum membrane</location>
        <topology evidence="1">Single-pass type II membrane protein</topology>
    </subcellularLocation>
</comment>
<comment type="developmental stage">
    <text evidence="4">Expressed in the embryo and larva throughout development, with highest levels in the developing brain, eyes and at the boundaries between somites.</text>
</comment>
<comment type="similarity">
    <text evidence="5">Belongs to the glycosyltransferase 61 family.</text>
</comment>
<reference key="1">
    <citation type="submission" date="2004-12" db="EMBL/GenBank/DDBJ databases">
        <title>Phylogeny of xylosyltransferases.</title>
        <authorList>
            <person name="Kiefer-Meyer M.C."/>
            <person name="Pagny S."/>
            <person name="Durambure G."/>
            <person name="Faye L."/>
            <person name="Gomord V."/>
            <person name="Mollicone R."/>
            <person name="Oriol R."/>
        </authorList>
    </citation>
    <scope>NUCLEOTIDE SEQUENCE [MRNA]</scope>
</reference>
<reference key="2">
    <citation type="submission" date="2005-05" db="EMBL/GenBank/DDBJ databases">
        <authorList>
            <consortium name="NIH - Zebrafish Gene Collection (ZGC) project"/>
        </authorList>
    </citation>
    <scope>NUCLEOTIDE SEQUENCE [LARGE SCALE MRNA]</scope>
</reference>
<reference key="3">
    <citation type="journal article" date="2012" name="Am. J. Hum. Genet.">
        <title>Exome sequencing and functional validation in zebrafish identify GTDC2 mutations as a cause of Walker-Warburg syndrome.</title>
        <authorList>
            <person name="Manzini M.C."/>
            <person name="Tambunan D.E."/>
            <person name="Hill R.S."/>
            <person name="Yu T.W."/>
            <person name="Maynard T.M."/>
            <person name="Heinzen E.L."/>
            <person name="Shianna K.V."/>
            <person name="Stevens C.R."/>
            <person name="Partlow J.N."/>
            <person name="Barry B.J."/>
            <person name="Rodriguez J."/>
            <person name="Gupta V.A."/>
            <person name="Al-Qudah A.K."/>
            <person name="Eyaid W.M."/>
            <person name="Friedman J.M."/>
            <person name="Salih M.A."/>
            <person name="Clark R."/>
            <person name="Moroni I."/>
            <person name="Mora M."/>
            <person name="Beggs A.H."/>
            <person name="Gabriel S.B."/>
            <person name="Walsh C.A."/>
        </authorList>
    </citation>
    <scope>DEVELOPMENTAL STAGE</scope>
</reference>
<gene>
    <name type="primary">pomgnt2</name>
    <name type="synonym">ago61</name>
    <name type="synonym">gtdc2</name>
    <name type="ORF">im:7153239</name>
    <name type="ORF">zgc:112079</name>
</gene>
<dbReference type="EC" id="2.4.1.312" evidence="1"/>
<dbReference type="EMBL" id="AJ868539">
    <property type="protein sequence ID" value="CAI30873.1"/>
    <property type="molecule type" value="mRNA"/>
</dbReference>
<dbReference type="EMBL" id="BC095667">
    <property type="protein sequence ID" value="AAH95667.1"/>
    <property type="molecule type" value="mRNA"/>
</dbReference>
<dbReference type="SMR" id="Q5NDE5"/>
<dbReference type="FunCoup" id="Q5NDE5">
    <property type="interactions" value="87"/>
</dbReference>
<dbReference type="STRING" id="7955.ENSDARP00000115932"/>
<dbReference type="CAZy" id="GT61">
    <property type="family name" value="Glycosyltransferase Family 61"/>
</dbReference>
<dbReference type="GlyCosmos" id="Q5NDE5">
    <property type="glycosylation" value="3 sites, No reported glycans"/>
</dbReference>
<dbReference type="PaxDb" id="7955-ENSDARP00000111957"/>
<dbReference type="Ensembl" id="ENSDART00000193303">
    <property type="protein sequence ID" value="ENSDARP00000151467"/>
    <property type="gene ID" value="ENSDARG00000010941"/>
</dbReference>
<dbReference type="AGR" id="ZFIN:ZDB-GENE-050522-242"/>
<dbReference type="ZFIN" id="ZDB-GENE-050522-242">
    <property type="gene designation" value="pomgnt2"/>
</dbReference>
<dbReference type="eggNOG" id="KOG4698">
    <property type="taxonomic scope" value="Eukaryota"/>
</dbReference>
<dbReference type="InParanoid" id="Q5NDE5"/>
<dbReference type="OMA" id="EFQMRVV"/>
<dbReference type="PhylomeDB" id="Q5NDE5"/>
<dbReference type="Reactome" id="R-DRE-5173105">
    <property type="pathway name" value="O-linked glycosylation"/>
</dbReference>
<dbReference type="UniPathway" id="UPA00378"/>
<dbReference type="PRO" id="PR:Q5NDE5"/>
<dbReference type="Proteomes" id="UP000000437">
    <property type="component" value="Unplaced"/>
</dbReference>
<dbReference type="Bgee" id="ENSDARG00000010941">
    <property type="expression patterns" value="Expressed in blastula and 29 other cell types or tissues"/>
</dbReference>
<dbReference type="ExpressionAtlas" id="Q5NDE5">
    <property type="expression patterns" value="baseline"/>
</dbReference>
<dbReference type="GO" id="GO:0005783">
    <property type="term" value="C:endoplasmic reticulum"/>
    <property type="evidence" value="ECO:0000250"/>
    <property type="project" value="UniProtKB"/>
</dbReference>
<dbReference type="GO" id="GO:0005789">
    <property type="term" value="C:endoplasmic reticulum membrane"/>
    <property type="evidence" value="ECO:0007669"/>
    <property type="project" value="UniProtKB-SubCell"/>
</dbReference>
<dbReference type="GO" id="GO:0008375">
    <property type="term" value="F:acetylglucosaminyltransferase activity"/>
    <property type="evidence" value="ECO:0000250"/>
    <property type="project" value="UniProtKB"/>
</dbReference>
<dbReference type="GO" id="GO:0097363">
    <property type="term" value="F:protein O-acetylglucosaminyltransferase activity"/>
    <property type="evidence" value="ECO:0000318"/>
    <property type="project" value="GO_Central"/>
</dbReference>
<dbReference type="GO" id="GO:0007420">
    <property type="term" value="P:brain development"/>
    <property type="evidence" value="ECO:0000315"/>
    <property type="project" value="ZFIN"/>
</dbReference>
<dbReference type="GO" id="GO:0055001">
    <property type="term" value="P:muscle cell development"/>
    <property type="evidence" value="ECO:0000315"/>
    <property type="project" value="ZFIN"/>
</dbReference>
<dbReference type="GO" id="GO:0001764">
    <property type="term" value="P:neuron migration"/>
    <property type="evidence" value="ECO:0000250"/>
    <property type="project" value="UniProtKB"/>
</dbReference>
<dbReference type="GO" id="GO:0006493">
    <property type="term" value="P:protein O-linked glycosylation"/>
    <property type="evidence" value="ECO:0000250"/>
    <property type="project" value="UniProtKB"/>
</dbReference>
<dbReference type="GO" id="GO:0035269">
    <property type="term" value="P:protein O-linked mannosylation"/>
    <property type="evidence" value="ECO:0000250"/>
    <property type="project" value="UniProtKB"/>
</dbReference>
<dbReference type="GO" id="GO:0060041">
    <property type="term" value="P:retina development in camera-type eye"/>
    <property type="evidence" value="ECO:0000315"/>
    <property type="project" value="ZFIN"/>
</dbReference>
<dbReference type="CDD" id="cd00063">
    <property type="entry name" value="FN3"/>
    <property type="match status" value="1"/>
</dbReference>
<dbReference type="FunFam" id="2.60.40.10:FF:001371">
    <property type="entry name" value="Protein O-linked mannose N-acetylglucosaminyltransferase 2 (beta 1,4-)"/>
    <property type="match status" value="1"/>
</dbReference>
<dbReference type="Gene3D" id="2.60.40.10">
    <property type="entry name" value="Immunoglobulins"/>
    <property type="match status" value="1"/>
</dbReference>
<dbReference type="InterPro" id="IPR003961">
    <property type="entry name" value="FN3_dom"/>
</dbReference>
<dbReference type="InterPro" id="IPR036116">
    <property type="entry name" value="FN3_sf"/>
</dbReference>
<dbReference type="InterPro" id="IPR049625">
    <property type="entry name" value="Glyco_transf_61_cat"/>
</dbReference>
<dbReference type="InterPro" id="IPR007657">
    <property type="entry name" value="Glycosyltransferase_61"/>
</dbReference>
<dbReference type="InterPro" id="IPR013783">
    <property type="entry name" value="Ig-like_fold"/>
</dbReference>
<dbReference type="PANTHER" id="PTHR20961">
    <property type="entry name" value="GLYCOSYLTRANSFERASE"/>
    <property type="match status" value="1"/>
</dbReference>
<dbReference type="PANTHER" id="PTHR20961:SF38">
    <property type="entry name" value="PROTEIN O-LINKED-MANNOSE BETA-1,4-N-ACETYLGLUCOSAMINYLTRANSFERASE 2"/>
    <property type="match status" value="1"/>
</dbReference>
<dbReference type="Pfam" id="PF04577">
    <property type="entry name" value="Glyco_transf_61"/>
    <property type="match status" value="1"/>
</dbReference>
<dbReference type="SUPFAM" id="SSF49265">
    <property type="entry name" value="Fibronectin type III"/>
    <property type="match status" value="1"/>
</dbReference>
<dbReference type="PROSITE" id="PS50853">
    <property type="entry name" value="FN3"/>
    <property type="match status" value="1"/>
</dbReference>
<feature type="chain" id="PRO_0000249019" description="Protein O-linked-mannose beta-1,4-N-acetylglucosaminyltransferase 2">
    <location>
        <begin position="1"/>
        <end position="578"/>
    </location>
</feature>
<feature type="topological domain" description="Cytoplasmic" evidence="2">
    <location>
        <begin position="1"/>
        <end position="4"/>
    </location>
</feature>
<feature type="transmembrane region" description="Helical; Signal-anchor for type II membrane protein" evidence="2">
    <location>
        <begin position="5"/>
        <end position="25"/>
    </location>
</feature>
<feature type="topological domain" description="Lumenal" evidence="2">
    <location>
        <begin position="26"/>
        <end position="578"/>
    </location>
</feature>
<feature type="domain" description="Fibronectin type-III" evidence="3">
    <location>
        <begin position="482"/>
        <end position="578"/>
    </location>
</feature>
<feature type="glycosylation site" description="N-linked (GlcNAc...) asparagine" evidence="2">
    <location>
        <position position="98"/>
    </location>
</feature>
<feature type="glycosylation site" description="N-linked (GlcNAc...) asparagine" evidence="2">
    <location>
        <position position="275"/>
    </location>
</feature>
<feature type="glycosylation site" description="N-linked (GlcNAc...) asparagine" evidence="2">
    <location>
        <position position="541"/>
    </location>
</feature>
<feature type="sequence conflict" description="In Ref. 2; AAH95667." evidence="5" ref="2">
    <location>
        <begin position="282"/>
        <end position="283"/>
    </location>
</feature>
<feature type="sequence conflict" description="In Ref. 2; AAH95667." evidence="5" ref="2">
    <original>Y</original>
    <variation>H</variation>
    <location>
        <position position="389"/>
    </location>
</feature>
<name>PMGT2_DANRE</name>
<keyword id="KW-0256">Endoplasmic reticulum</keyword>
<keyword id="KW-0325">Glycoprotein</keyword>
<keyword id="KW-0328">Glycosyltransferase</keyword>
<keyword id="KW-0472">Membrane</keyword>
<keyword id="KW-1185">Reference proteome</keyword>
<keyword id="KW-0735">Signal-anchor</keyword>
<keyword id="KW-0808">Transferase</keyword>
<keyword id="KW-0812">Transmembrane</keyword>
<keyword id="KW-1133">Transmembrane helix</keyword>